<dbReference type="EC" id="4.1.1.31" evidence="1"/>
<dbReference type="EMBL" id="CP000561">
    <property type="protein sequence ID" value="ABO08812.1"/>
    <property type="molecule type" value="Genomic_DNA"/>
</dbReference>
<dbReference type="RefSeq" id="WP_011850070.1">
    <property type="nucleotide sequence ID" value="NC_009073.1"/>
</dbReference>
<dbReference type="SMR" id="A3MVZ5"/>
<dbReference type="STRING" id="410359.Pcal_1392"/>
<dbReference type="GeneID" id="4909214"/>
<dbReference type="KEGG" id="pcl:Pcal_1392"/>
<dbReference type="eggNOG" id="arCOG04435">
    <property type="taxonomic scope" value="Archaea"/>
</dbReference>
<dbReference type="HOGENOM" id="CLU_517433_0_0_2"/>
<dbReference type="OrthoDB" id="85849at2157"/>
<dbReference type="Proteomes" id="UP000001431">
    <property type="component" value="Chromosome"/>
</dbReference>
<dbReference type="GO" id="GO:0000287">
    <property type="term" value="F:magnesium ion binding"/>
    <property type="evidence" value="ECO:0007669"/>
    <property type="project" value="UniProtKB-UniRule"/>
</dbReference>
<dbReference type="GO" id="GO:0008964">
    <property type="term" value="F:phosphoenolpyruvate carboxylase activity"/>
    <property type="evidence" value="ECO:0007669"/>
    <property type="project" value="UniProtKB-UniRule"/>
</dbReference>
<dbReference type="GO" id="GO:0015977">
    <property type="term" value="P:carbon fixation"/>
    <property type="evidence" value="ECO:0007669"/>
    <property type="project" value="UniProtKB-UniRule"/>
</dbReference>
<dbReference type="GO" id="GO:0006107">
    <property type="term" value="P:oxaloacetate metabolic process"/>
    <property type="evidence" value="ECO:0007669"/>
    <property type="project" value="UniProtKB-UniRule"/>
</dbReference>
<dbReference type="GO" id="GO:0006099">
    <property type="term" value="P:tricarboxylic acid cycle"/>
    <property type="evidence" value="ECO:0007669"/>
    <property type="project" value="InterPro"/>
</dbReference>
<dbReference type="HAMAP" id="MF_01904">
    <property type="entry name" value="PEPcase_type2"/>
    <property type="match status" value="1"/>
</dbReference>
<dbReference type="InterPro" id="IPR007566">
    <property type="entry name" value="PEP_COase_arc-type"/>
</dbReference>
<dbReference type="InterPro" id="IPR015813">
    <property type="entry name" value="Pyrv/PenolPyrv_kinase-like_dom"/>
</dbReference>
<dbReference type="NCBIfam" id="TIGR02751">
    <property type="entry name" value="PEPCase_arch"/>
    <property type="match status" value="1"/>
</dbReference>
<dbReference type="Pfam" id="PF14010">
    <property type="entry name" value="PEPcase_2"/>
    <property type="match status" value="1"/>
</dbReference>
<dbReference type="PIRSF" id="PIRSF006677">
    <property type="entry name" value="UCP006677"/>
    <property type="match status" value="1"/>
</dbReference>
<dbReference type="SUPFAM" id="SSF51621">
    <property type="entry name" value="Phosphoenolpyruvate/pyruvate domain"/>
    <property type="match status" value="1"/>
</dbReference>
<sequence length="459" mass="51305">MPIPRLMCTQHPDTTVKITAAEEVDEAIVAFTAYGCDEVMVDYEGKATPYSQPKEVVMKAAKSELPLGEKFVITVRLPNPRLEEFDRAMLALEAAVVANYFSVKYMGVRAVKWVVLPMVEDVETMSLVRRMLKRKVEDYKAEAKVDVGNIEVIPLFEDAFVQLKAKALLGEVFKGEEVREVRLFLGKSDSAVKHGHLASALAIAYTLSRLGDVESELGLRIRPILGMGSPPFRGGLNNPRLAPMEVVQYAGYYTATIQSAVRYDVALEEFLKVREAILNGCCAPRQRAPDEVLHIVQEASARYRALVMKYADKVIEVARLVPSTRDRVSWTAYGRTLTGGERVVNMPRAIVYTSAWYATGLPPTLLDAPYLLELAKSDKLDLVLKVLPTYLKELEYDLEFFDRATAEKYLDGEIVKAVVELADYLGLEARPNPAYATLLRMPRNEANIIALGKYRKFLG</sequence>
<accession>A3MVZ5</accession>
<comment type="function">
    <text evidence="1">Catalyzes the irreversible beta-carboxylation of phosphoenolpyruvate (PEP) to form oxaloacetate (OAA), a four-carbon dicarboxylic acid source for the tricarboxylic acid cycle.</text>
</comment>
<comment type="catalytic activity">
    <reaction evidence="1">
        <text>oxaloacetate + phosphate = phosphoenolpyruvate + hydrogencarbonate</text>
        <dbReference type="Rhea" id="RHEA:28370"/>
        <dbReference type="ChEBI" id="CHEBI:16452"/>
        <dbReference type="ChEBI" id="CHEBI:17544"/>
        <dbReference type="ChEBI" id="CHEBI:43474"/>
        <dbReference type="ChEBI" id="CHEBI:58702"/>
        <dbReference type="EC" id="4.1.1.31"/>
    </reaction>
</comment>
<comment type="cofactor">
    <cofactor evidence="1">
        <name>Mg(2+)</name>
        <dbReference type="ChEBI" id="CHEBI:18420"/>
    </cofactor>
</comment>
<comment type="subunit">
    <text evidence="1">Homotetramer.</text>
</comment>
<comment type="similarity">
    <text evidence="1">Belongs to the PEPCase type 2 family.</text>
</comment>
<organism>
    <name type="scientific">Pyrobaculum calidifontis (strain DSM 21063 / JCM 11548 / VA1)</name>
    <dbReference type="NCBI Taxonomy" id="410359"/>
    <lineage>
        <taxon>Archaea</taxon>
        <taxon>Thermoproteota</taxon>
        <taxon>Thermoprotei</taxon>
        <taxon>Thermoproteales</taxon>
        <taxon>Thermoproteaceae</taxon>
        <taxon>Pyrobaculum</taxon>
    </lineage>
</organism>
<reference key="1">
    <citation type="submission" date="2007-02" db="EMBL/GenBank/DDBJ databases">
        <title>Complete sequence of Pyrobaculum calidifontis JCM 11548.</title>
        <authorList>
            <consortium name="US DOE Joint Genome Institute"/>
            <person name="Copeland A."/>
            <person name="Lucas S."/>
            <person name="Lapidus A."/>
            <person name="Barry K."/>
            <person name="Glavina del Rio T."/>
            <person name="Dalin E."/>
            <person name="Tice H."/>
            <person name="Pitluck S."/>
            <person name="Chain P."/>
            <person name="Malfatti S."/>
            <person name="Shin M."/>
            <person name="Vergez L."/>
            <person name="Schmutz J."/>
            <person name="Larimer F."/>
            <person name="Land M."/>
            <person name="Hauser L."/>
            <person name="Kyrpides N."/>
            <person name="Mikhailova N."/>
            <person name="Cozen A.E."/>
            <person name="Fitz-Gibbon S.T."/>
            <person name="House C.H."/>
            <person name="Saltikov C."/>
            <person name="Lowe T.M."/>
            <person name="Richardson P."/>
        </authorList>
    </citation>
    <scope>NUCLEOTIDE SEQUENCE [LARGE SCALE GENOMIC DNA]</scope>
    <source>
        <strain>DSM 21063 / JCM 11548 / VA1</strain>
    </source>
</reference>
<proteinExistence type="inferred from homology"/>
<protein>
    <recommendedName>
        <fullName evidence="1">Phosphoenolpyruvate carboxylase</fullName>
        <shortName evidence="1">PEPC</shortName>
        <shortName evidence="1">PEPCase</shortName>
        <ecNumber evidence="1">4.1.1.31</ecNumber>
    </recommendedName>
</protein>
<feature type="chain" id="PRO_0000309609" description="Phosphoenolpyruvate carboxylase">
    <location>
        <begin position="1"/>
        <end position="459"/>
    </location>
</feature>
<name>CAPPA_PYRCJ</name>
<keyword id="KW-0120">Carbon dioxide fixation</keyword>
<keyword id="KW-0456">Lyase</keyword>
<keyword id="KW-0460">Magnesium</keyword>
<gene>
    <name evidence="1" type="primary">ppcA</name>
    <name type="ordered locus">Pcal_1392</name>
</gene>
<evidence type="ECO:0000255" key="1">
    <source>
        <dbReference type="HAMAP-Rule" id="MF_01904"/>
    </source>
</evidence>